<gene>
    <name type="primary">PX</name>
</gene>
<keyword id="KW-0238">DNA-binding</keyword>
<keyword id="KW-0426">Late protein</keyword>
<keyword id="KW-0946">Virion</keyword>
<sequence>MAGRNVTLRLRVPVRTKITGAGRRRGRRTRIRCGRMKGGFLPALIPLIAAAIGAVPGIASVALQAARH</sequence>
<evidence type="ECO:0000250" key="1"/>
<evidence type="ECO:0000255" key="2"/>
<evidence type="ECO:0000305" key="3"/>
<dbReference type="EMBL" id="U55001">
    <property type="protein sequence ID" value="AAB05441.1"/>
    <property type="molecule type" value="Genomic_DNA"/>
</dbReference>
<dbReference type="RefSeq" id="AP_000057.1">
    <property type="nucleotide sequence ID" value="AC_000003.1"/>
</dbReference>
<dbReference type="GO" id="GO:0019013">
    <property type="term" value="C:viral nucleocapsid"/>
    <property type="evidence" value="ECO:0007669"/>
    <property type="project" value="InterPro"/>
</dbReference>
<dbReference type="GO" id="GO:0003677">
    <property type="term" value="F:DNA binding"/>
    <property type="evidence" value="ECO:0007669"/>
    <property type="project" value="UniProtKB-KW"/>
</dbReference>
<dbReference type="InterPro" id="IPR008393">
    <property type="entry name" value="Adenovirus_late_L2_mu_core"/>
</dbReference>
<dbReference type="Pfam" id="PF05829">
    <property type="entry name" value="Adeno_PX"/>
    <property type="match status" value="1"/>
</dbReference>
<feature type="propeptide" id="PRO_0000036531" evidence="2">
    <location>
        <begin position="1"/>
        <end position="21"/>
    </location>
</feature>
<feature type="peptide" id="PRO_0000036532" description="Late L2 mu core protein">
    <location>
        <begin position="22"/>
        <end position="39"/>
    </location>
</feature>
<feature type="propeptide" id="PRO_0000036533" evidence="2">
    <location>
        <begin position="40"/>
        <end position="68"/>
    </location>
</feature>
<feature type="site" description="Cleavage; by adenovirus protease" evidence="2">
    <location>
        <begin position="21"/>
        <end position="22"/>
    </location>
</feature>
<feature type="site" description="Cleavage; by adenovirus protease" evidence="2">
    <location>
        <begin position="39"/>
        <end position="40"/>
    </location>
</feature>
<proteinExistence type="inferred from homology"/>
<reference key="1">
    <citation type="submission" date="1996-08" db="EMBL/GenBank/DDBJ databases">
        <title>DNA sequence and genomic organization of canine adenovirus type 1.</title>
        <authorList>
            <person name="Campbell J.B."/>
            <person name="Zhao Y."/>
        </authorList>
    </citation>
    <scope>NUCLEOTIDE SEQUENCE [LARGE SCALE GENOMIC DNA]</scope>
</reference>
<accession>P68974</accession>
<accession>Q65953</accession>
<comment type="function">
    <text evidence="1">The role of the precursor might be to condense the viral prochromatin for encapsidation by virtue of the two basic domains.</text>
</comment>
<comment type="subcellular location">
    <subcellularLocation>
        <location evidence="3">Virion</location>
    </subcellularLocation>
</comment>
<comment type="similarity">
    <text evidence="3">Belongs to the adenoviridae pX family.</text>
</comment>
<organismHost>
    <name type="scientific">Canis lupus familiaris</name>
    <name type="common">Dog</name>
    <name type="synonym">Canis familiaris</name>
    <dbReference type="NCBI Taxonomy" id="9615"/>
</organismHost>
<protein>
    <recommendedName>
        <fullName>Late L2 mu core protein</fullName>
    </recommendedName>
    <alternativeName>
        <fullName>Protein X</fullName>
        <shortName>pX</shortName>
    </alternativeName>
    <alternativeName>
        <fullName>pMu</fullName>
    </alternativeName>
</protein>
<organism>
    <name type="scientific">Canine adenovirus serotype 1 (strain CLL)</name>
    <name type="common">CAdV-1</name>
    <name type="synonym">Canine adenovirus 1 (strain CLL)</name>
    <dbReference type="NCBI Taxonomy" id="69150"/>
    <lineage>
        <taxon>Viruses</taxon>
        <taxon>Varidnaviria</taxon>
        <taxon>Bamfordvirae</taxon>
        <taxon>Preplasmiviricota</taxon>
        <taxon>Tectiliviricetes</taxon>
        <taxon>Rowavirales</taxon>
        <taxon>Adenoviridae</taxon>
        <taxon>Mastadenovirus</taxon>
        <taxon>Canine mastadenovirus A</taxon>
    </lineage>
</organism>
<name>L2MU_ADECC</name>